<protein>
    <recommendedName>
        <fullName evidence="3">5-hmdU DNA kinase 1</fullName>
    </recommendedName>
    <alternativeName>
        <fullName evidence="3">5-hydroxymethyluracil DNA kinase</fullName>
    </alternativeName>
    <alternativeName>
        <fullName evidence="3">P-loop kinase</fullName>
    </alternativeName>
    <alternativeName>
        <fullName evidence="3">gp67</fullName>
    </alternativeName>
</protein>
<gene>
    <name evidence="5" type="ORF">Vi01_061c</name>
</gene>
<organism>
    <name type="scientific">Salmonella phage ViI</name>
    <dbReference type="NCBI Taxonomy" id="1987993"/>
    <lineage>
        <taxon>Viruses</taxon>
        <taxon>Duplodnaviria</taxon>
        <taxon>Heunggongvirae</taxon>
        <taxon>Uroviricota</taxon>
        <taxon>Caudoviricetes</taxon>
        <taxon>Ackermannviridae</taxon>
        <taxon>Cvivirinae</taxon>
        <taxon>Kuttervirus</taxon>
    </lineage>
</organism>
<accession>E1XT70</accession>
<comment type="function">
    <text evidence="1 2">Phosphorylates 5-hydroxymethyluracil (5hmdU) into 5-phosphomethyl-2'-deoxyuridine (5- PmdU) on DNA as a step in the pathway leading to thymidine hypermodifications in the viral genome (PubMed:34522950). The phosphate is added internally to the DNA polymer (PubMed:34522950). As a final result of the pathway of hypermodification, 5-aminoethoxy-2'-deoxymethyluridine (5-NeOmdU) substitutes for about 40% of the thymidines in the viral DNA (PubMed:29555775, PubMed:34522950). These modifications probably prevent degradation of viral genome by the host restriction-modification antiviral defense system (PubMed:34522950).</text>
</comment>
<comment type="catalytic activity">
    <reaction evidence="2">
        <text>5-hydroxymethyl-dUMP in DNA + ATP = 5-phosphomethyl-dUMP in DNA + ADP + H(+)</text>
        <dbReference type="Rhea" id="RHEA:71543"/>
        <dbReference type="Rhea" id="RHEA-COMP:18039"/>
        <dbReference type="Rhea" id="RHEA-COMP:18041"/>
        <dbReference type="ChEBI" id="CHEBI:15378"/>
        <dbReference type="ChEBI" id="CHEBI:30616"/>
        <dbReference type="ChEBI" id="CHEBI:190917"/>
        <dbReference type="ChEBI" id="CHEBI:190918"/>
        <dbReference type="ChEBI" id="CHEBI:456216"/>
    </reaction>
</comment>
<comment type="similarity">
    <text evidence="4">Belongs to the thymidylate kinase family. 5-hmdU DNA kinase subfamily.</text>
</comment>
<name>HMUD1_BPSAV</name>
<organismHost>
    <name type="scientific">Salmonella typhi</name>
    <dbReference type="NCBI Taxonomy" id="90370"/>
</organismHost>
<dbReference type="EMBL" id="FQ312032">
    <property type="protein sequence ID" value="CBW37929.1"/>
    <property type="molecule type" value="Genomic_DNA"/>
</dbReference>
<dbReference type="SMR" id="E1XT70"/>
<dbReference type="Proteomes" id="UP000000339">
    <property type="component" value="Segment"/>
</dbReference>
<dbReference type="GO" id="GO:0099018">
    <property type="term" value="P:symbiont-mediated evasion of host restriction-modification system"/>
    <property type="evidence" value="ECO:0007669"/>
    <property type="project" value="UniProtKB-KW"/>
</dbReference>
<dbReference type="GO" id="GO:0052170">
    <property type="term" value="P:symbiont-mediated suppression of host innate immune response"/>
    <property type="evidence" value="ECO:0007669"/>
    <property type="project" value="UniProtKB-KW"/>
</dbReference>
<dbReference type="Gene3D" id="3.40.50.300">
    <property type="entry name" value="P-loop containing nucleotide triphosphate hydrolases"/>
    <property type="match status" value="1"/>
</dbReference>
<dbReference type="InterPro" id="IPR040924">
    <property type="entry name" value="HMUDK/HMUD1"/>
</dbReference>
<dbReference type="InterPro" id="IPR027417">
    <property type="entry name" value="P-loop_NTPase"/>
</dbReference>
<dbReference type="Pfam" id="PF18748">
    <property type="entry name" value="HMUDK_HMUD1"/>
    <property type="match status" value="1"/>
</dbReference>
<dbReference type="SUPFAM" id="SSF52540">
    <property type="entry name" value="P-loop containing nucleoside triphosphate hydrolases"/>
    <property type="match status" value="1"/>
</dbReference>
<feature type="chain" id="PRO_0000456268" description="5-hmdU DNA kinase 1">
    <location>
        <begin position="1"/>
        <end position="220"/>
    </location>
</feature>
<keyword id="KW-0945">Host-virus interaction</keyword>
<keyword id="KW-1090">Inhibition of host innate immune response by virus</keyword>
<keyword id="KW-1185">Reference proteome</keyword>
<keyword id="KW-1258">Restriction-modification system evasion by virus</keyword>
<keyword id="KW-0899">Viral immunoevasion</keyword>
<sequence length="220" mass="24603">MSYSLKGLLKRPVHLFVKPPAVEGEYPARGELYYVKGSNGSGKSTVPSYLAENDPQAYVVTYNGKIMLTVCPSYNIICIGKYDKSKSKGVDSLKDTEQMLFALSIADQPEYLKYDVLFEGIIPSTLLSSWIPRLTRPPRELVVLFMDTPLETCVSRVKSRNGGADFNESLVVEKWERVHDHSQRHKGLFPTVPAGMMKSNGLTIEQAVFAFLNRDFGSID</sequence>
<evidence type="ECO:0000269" key="1">
    <source>
    </source>
</evidence>
<evidence type="ECO:0000269" key="2">
    <source>
    </source>
</evidence>
<evidence type="ECO:0000303" key="3">
    <source>
    </source>
</evidence>
<evidence type="ECO:0000305" key="4"/>
<evidence type="ECO:0000312" key="5">
    <source>
        <dbReference type="EMBL" id="CBW37929.1"/>
    </source>
</evidence>
<proteinExistence type="evidence at protein level"/>
<reference key="1">
    <citation type="journal article" date="2010" name="J. Bacteriol.">
        <title>A conserved acetyl esterase domain targets diverse bacteriophages to the Vi capsular receptor of Salmonella enterica serovar Typhi.</title>
        <authorList>
            <person name="Pickard D."/>
            <person name="Toribio A.L."/>
            <person name="Petty N.K."/>
            <person name="van Tonder A."/>
            <person name="Yu L."/>
            <person name="Goulding D."/>
            <person name="Barrell B."/>
            <person name="Rance R."/>
            <person name="Harris D."/>
            <person name="Wetter M."/>
            <person name="Wain J."/>
            <person name="Choudhary J."/>
            <person name="Thomson N."/>
            <person name="Dougan G."/>
        </authorList>
    </citation>
    <scope>NUCLEOTIDE SEQUENCE [LARGE SCALE GENOMIC DNA]</scope>
</reference>
<reference key="2">
    <citation type="journal article" date="2018" name="Proc. Natl. Acad. Sci. U.S.A.">
        <title>Identification and biosynthesis of thymidine hypermodifications in the genomic DNA of widespread bacterial viruses.</title>
        <authorList>
            <person name="Lee Y.J."/>
            <person name="Dai N."/>
            <person name="Walsh S.E."/>
            <person name="Mueller S."/>
            <person name="Fraser M.E."/>
            <person name="Kauffman K.M."/>
            <person name="Guan C."/>
            <person name="Correa I.R. Jr."/>
            <person name="Weigele P.R."/>
        </authorList>
    </citation>
    <scope>FUNCTION</scope>
</reference>
<reference key="3">
    <citation type="journal article" date="2021" name="Nucleic Acids Res.">
        <title>Pathways of thymidine hypermodification.</title>
        <authorList>
            <person name="Lee Y.J."/>
            <person name="Dai N."/>
            <person name="Mueller S.I."/>
            <person name="Guan C."/>
            <person name="Parker M.J."/>
            <person name="Fraser M.E."/>
            <person name="Walsh S.E."/>
            <person name="Sridar J."/>
            <person name="Mulholland A."/>
            <person name="Nayak K."/>
            <person name="Sun Z."/>
            <person name="Lin Y.C."/>
            <person name="Comb D.G."/>
            <person name="Marks K."/>
            <person name="Gonzalez R."/>
            <person name="Dowling D.P."/>
            <person name="Bandarian V."/>
            <person name="Saleh L."/>
            <person name="Correa I.R."/>
            <person name="Weigele P.R."/>
        </authorList>
    </citation>
    <scope>FUNCTION</scope>
    <scope>CATALYTIC ACTIVITY</scope>
</reference>